<gene>
    <name type="ordered locus">RP786</name>
</gene>
<reference key="1">
    <citation type="journal article" date="1997" name="Microbiology">
        <title>Genomic rearrangements during evolution of the obligate intracellular parasite Rickettsia prowazekii as inferred from an analysis of 52015 bp nucleotide sequence.</title>
        <authorList>
            <person name="Andersson J.O."/>
            <person name="Andersson S.G.E."/>
        </authorList>
    </citation>
    <scope>NUCLEOTIDE SEQUENCE [GENOMIC DNA]</scope>
    <source>
        <strain>Madrid E</strain>
    </source>
</reference>
<reference key="2">
    <citation type="journal article" date="1998" name="Nature">
        <title>The genome sequence of Rickettsia prowazekii and the origin of mitochondria.</title>
        <authorList>
            <person name="Andersson S.G.E."/>
            <person name="Zomorodipour A."/>
            <person name="Andersson J.O."/>
            <person name="Sicheritz-Ponten T."/>
            <person name="Alsmark U.C.M."/>
            <person name="Podowski R.M."/>
            <person name="Naeslund A.K."/>
            <person name="Eriksson A.-S."/>
            <person name="Winkler H.H."/>
            <person name="Kurland C.G."/>
        </authorList>
    </citation>
    <scope>NUCLEOTIDE SEQUENCE [LARGE SCALE GENOMIC DNA]</scope>
    <source>
        <strain>Madrid E</strain>
    </source>
</reference>
<feature type="chain" id="PRO_0000103422" description="Uncharacterized membrane protein RP786">
    <location>
        <begin position="1"/>
        <end position="297"/>
    </location>
</feature>
<feature type="transmembrane region" description="Helical" evidence="1">
    <location>
        <begin position="1"/>
        <end position="21"/>
    </location>
</feature>
<feature type="transmembrane region" description="Helical" evidence="1">
    <location>
        <begin position="32"/>
        <end position="52"/>
    </location>
</feature>
<feature type="transmembrane region" description="Helical" evidence="1">
    <location>
        <begin position="72"/>
        <end position="92"/>
    </location>
</feature>
<feature type="transmembrane region" description="Helical" evidence="1">
    <location>
        <begin position="98"/>
        <end position="118"/>
    </location>
</feature>
<feature type="transmembrane region" description="Helical" evidence="1">
    <location>
        <begin position="120"/>
        <end position="140"/>
    </location>
</feature>
<feature type="transmembrane region" description="Helical" evidence="1">
    <location>
        <begin position="194"/>
        <end position="214"/>
    </location>
</feature>
<feature type="transmembrane region" description="Helical" evidence="1">
    <location>
        <begin position="218"/>
        <end position="238"/>
    </location>
</feature>
<feature type="transmembrane region" description="Helical" evidence="1">
    <location>
        <begin position="253"/>
        <end position="273"/>
    </location>
</feature>
<feature type="transmembrane region" description="Helical" evidence="1">
    <location>
        <begin position="274"/>
        <end position="294"/>
    </location>
</feature>
<accession>O05976</accession>
<keyword id="KW-1003">Cell membrane</keyword>
<keyword id="KW-0472">Membrane</keyword>
<keyword id="KW-1185">Reference proteome</keyword>
<keyword id="KW-0812">Transmembrane</keyword>
<keyword id="KW-1133">Transmembrane helix</keyword>
<comment type="subcellular location">
    <subcellularLocation>
        <location evidence="2">Cell membrane</location>
        <topology evidence="2">Multi-pass membrane protein</topology>
    </subcellularLocation>
</comment>
<comment type="similarity">
    <text evidence="2">Belongs to the TerC family.</text>
</comment>
<proteinExistence type="inferred from homology"/>
<evidence type="ECO:0000255" key="1"/>
<evidence type="ECO:0000305" key="2"/>
<name>Y786_RICPR</name>
<sequence>MSWIIFYTIIAALLILDLGIIHKKNKVISFKGSILLSLFYFIISCLFGIYVYHNMGLDHAREYYTCFLIEKAMALDNIFIISIIFQFFNIPSTYQHRVLFFGIIGVIIFKAIIIYGGIMLIHKFSWLLYILAVILIATGIKTFNVSHKTYDIQNSYIYKSIIKNLNITHDLEGQKFVIKRNNKLYFSTLFVSLILIETIDLVFAIDSIAAIFAITNDVYIIYTSNIFAILGLRSLFFCLSEIVERFSYIKYSLALILIFIGFKIFIHHYIEIPAYISLTVTISSLLFGIIASILEKI</sequence>
<protein>
    <recommendedName>
        <fullName>Uncharacterized membrane protein RP786</fullName>
    </recommendedName>
</protein>
<organism>
    <name type="scientific">Rickettsia prowazekii (strain Madrid E)</name>
    <dbReference type="NCBI Taxonomy" id="272947"/>
    <lineage>
        <taxon>Bacteria</taxon>
        <taxon>Pseudomonadati</taxon>
        <taxon>Pseudomonadota</taxon>
        <taxon>Alphaproteobacteria</taxon>
        <taxon>Rickettsiales</taxon>
        <taxon>Rickettsiaceae</taxon>
        <taxon>Rickettsieae</taxon>
        <taxon>Rickettsia</taxon>
        <taxon>typhus group</taxon>
    </lineage>
</organism>
<dbReference type="EMBL" id="Y11779">
    <property type="protein sequence ID" value="CAA72460.1"/>
    <property type="molecule type" value="Genomic_DNA"/>
</dbReference>
<dbReference type="EMBL" id="AJ235273">
    <property type="protein sequence ID" value="CAA15212.1"/>
    <property type="molecule type" value="Genomic_DNA"/>
</dbReference>
<dbReference type="PIR" id="D71639">
    <property type="entry name" value="D71639"/>
</dbReference>
<dbReference type="RefSeq" id="NP_221136.1">
    <property type="nucleotide sequence ID" value="NC_000963.1"/>
</dbReference>
<dbReference type="STRING" id="272947.gene:17555855"/>
<dbReference type="EnsemblBacteria" id="CAA15212">
    <property type="protein sequence ID" value="CAA15212"/>
    <property type="gene ID" value="CAA15212"/>
</dbReference>
<dbReference type="KEGG" id="rpr:RP786"/>
<dbReference type="PATRIC" id="fig|272947.5.peg.822"/>
<dbReference type="eggNOG" id="COG0861">
    <property type="taxonomic scope" value="Bacteria"/>
</dbReference>
<dbReference type="HOGENOM" id="CLU_045644_1_0_5"/>
<dbReference type="OrthoDB" id="9783692at2"/>
<dbReference type="Proteomes" id="UP000002480">
    <property type="component" value="Chromosome"/>
</dbReference>
<dbReference type="GO" id="GO:0005886">
    <property type="term" value="C:plasma membrane"/>
    <property type="evidence" value="ECO:0007669"/>
    <property type="project" value="UniProtKB-SubCell"/>
</dbReference>
<dbReference type="InterPro" id="IPR005496">
    <property type="entry name" value="Integral_membrane_TerC"/>
</dbReference>
<dbReference type="InterPro" id="IPR022369">
    <property type="entry name" value="Integral_membrane_TerC_rswitch"/>
</dbReference>
<dbReference type="NCBIfam" id="TIGR03718">
    <property type="entry name" value="R_switched_Alx"/>
    <property type="match status" value="1"/>
</dbReference>
<dbReference type="PANTHER" id="PTHR30238">
    <property type="entry name" value="MEMBRANE BOUND PREDICTED REDOX MODULATOR"/>
    <property type="match status" value="1"/>
</dbReference>
<dbReference type="PANTHER" id="PTHR30238:SF0">
    <property type="entry name" value="THYLAKOID MEMBRANE PROTEIN TERC, CHLOROPLASTIC"/>
    <property type="match status" value="1"/>
</dbReference>
<dbReference type="Pfam" id="PF03741">
    <property type="entry name" value="TerC"/>
    <property type="match status" value="1"/>
</dbReference>